<gene>
    <name type="primary">STS1</name>
</gene>
<organism>
    <name type="scientific">Thapsia garganica</name>
    <name type="common">Deadly carrot</name>
    <dbReference type="NCBI Taxonomy" id="79022"/>
    <lineage>
        <taxon>Eukaryota</taxon>
        <taxon>Viridiplantae</taxon>
        <taxon>Streptophyta</taxon>
        <taxon>Embryophyta</taxon>
        <taxon>Tracheophyta</taxon>
        <taxon>Spermatophyta</taxon>
        <taxon>Magnoliopsida</taxon>
        <taxon>eudicotyledons</taxon>
        <taxon>Gunneridae</taxon>
        <taxon>Pentapetalae</taxon>
        <taxon>asterids</taxon>
        <taxon>campanulids</taxon>
        <taxon>Apiales</taxon>
        <taxon>Apiaceae</taxon>
        <taxon>Apioideae</taxon>
        <taxon>Scandiceae</taxon>
        <taxon>Daucinae</taxon>
        <taxon>Thapsia</taxon>
    </lineage>
</organism>
<evidence type="ECO:0000250" key="1"/>
<evidence type="ECO:0000250" key="2">
    <source>
        <dbReference type="UniProtKB" id="O81192"/>
    </source>
</evidence>
<evidence type="ECO:0000269" key="3">
    <source>
    </source>
</evidence>
<evidence type="ECO:0000305" key="4"/>
<sequence>MAVYVNSTTGPPPSVGRNSAGFHPSIWGDKFITSSNSAVQKTDVDRKEEEKLQLLKQEVKKMLTAGDTSQQDLICLIDDIQRLGLSYHFEAEIDTLLQHVKHSYVEHYGKKNHDNLHDVALSFRLLRQEGHNISSDVFSKFQDSDGKFKEELVEDVRGMLSLFEAAHLRVHGENILEDALEFTTTHLNSYLNSNPSSSLADLVRRALKYPLRKSFNRMVARHYISVYHKFDWHKQVLLDMAKCDFNLVQKVHQNELGYITRWWKDLDFTNKLPFARDRVVECYFWITGVYFEPRYAAPRKFLTEVMSLTSIIDDIYDVYGTPDELVQLADAIDKWDISILDQLPEYVRHAYKPLLDTFAEAEEEMANEGLPTYGVDYAKEAFKRLAVAYLQETKWLQAQYIPTFEEYLSVALVSAGGNMLSVSSFVRMGNIATREAFEWLSKDPLIANGLSVIIRLSDDIVGHEFESQRPHIPSAVECYMKSHDVTKETAYAELQKPIIKAWKDMNEGCLHPEAPPKPLLERVLNLARVLNFLYDGHDGYTHSSTRTKDIITTAFINPIPL</sequence>
<accession>K4L9M2</accession>
<feature type="chain" id="PRO_0000424292" description="Sesquiterpene synthase 1">
    <location>
        <begin position="1"/>
        <end position="561"/>
    </location>
</feature>
<feature type="short sequence motif" description="DDXXD motif">
    <location>
        <begin position="313"/>
        <end position="317"/>
    </location>
</feature>
<feature type="binding site" evidence="2">
    <location>
        <position position="313"/>
    </location>
    <ligand>
        <name>Mg(2+)</name>
        <dbReference type="ChEBI" id="CHEBI:18420"/>
        <label>1</label>
    </ligand>
</feature>
<feature type="binding site" evidence="2">
    <location>
        <position position="313"/>
    </location>
    <ligand>
        <name>Mg(2+)</name>
        <dbReference type="ChEBI" id="CHEBI:18420"/>
        <label>2</label>
    </ligand>
</feature>
<feature type="binding site" evidence="2">
    <location>
        <position position="317"/>
    </location>
    <ligand>
        <name>Mg(2+)</name>
        <dbReference type="ChEBI" id="CHEBI:18420"/>
        <label>1</label>
    </ligand>
</feature>
<feature type="binding site" evidence="2">
    <location>
        <position position="317"/>
    </location>
    <ligand>
        <name>Mg(2+)</name>
        <dbReference type="ChEBI" id="CHEBI:18420"/>
        <label>2</label>
    </ligand>
</feature>
<feature type="binding site" evidence="2">
    <location>
        <position position="458"/>
    </location>
    <ligand>
        <name>Mg(2+)</name>
        <dbReference type="ChEBI" id="CHEBI:18420"/>
        <label>3</label>
    </ligand>
</feature>
<feature type="binding site" evidence="2">
    <location>
        <position position="466"/>
    </location>
    <ligand>
        <name>Mg(2+)</name>
        <dbReference type="ChEBI" id="CHEBI:18420"/>
        <label>3</label>
    </ligand>
</feature>
<name>STS1_THAGA</name>
<keyword id="KW-0963">Cytoplasm</keyword>
<keyword id="KW-0456">Lyase</keyword>
<keyword id="KW-0460">Magnesium</keyword>
<keyword id="KW-0464">Manganese</keyword>
<keyword id="KW-0479">Metal-binding</keyword>
<proteinExistence type="evidence at protein level"/>
<protein>
    <recommendedName>
        <fullName>Sesquiterpene synthase 1</fullName>
        <ecNumber>4.2.3.13</ecNumber>
    </recommendedName>
    <alternativeName>
        <fullName>D-cadinene synthase STS1</fullName>
    </alternativeName>
</protein>
<comment type="function">
    <text evidence="3">Involved in the biosynthesis of delta-cadinene.</text>
</comment>
<comment type="catalytic activity">
    <reaction evidence="3">
        <text>(2E,6E)-farnesyl diphosphate = (1S,8aR)-delta-cadinene + diphosphate</text>
        <dbReference type="Rhea" id="RHEA:19525"/>
        <dbReference type="ChEBI" id="CHEBI:15385"/>
        <dbReference type="ChEBI" id="CHEBI:33019"/>
        <dbReference type="ChEBI" id="CHEBI:175763"/>
        <dbReference type="EC" id="4.2.3.13"/>
    </reaction>
</comment>
<comment type="cofactor">
    <cofactor evidence="1">
        <name>Mn(2+)</name>
        <dbReference type="ChEBI" id="CHEBI:29035"/>
    </cofactor>
    <cofactor evidence="1">
        <name>Mg(2+)</name>
        <dbReference type="ChEBI" id="CHEBI:18420"/>
    </cofactor>
    <text evidence="1">Binds 3 manganese or magnesium ions per subunit.</text>
</comment>
<comment type="pathway">
    <text>Secondary metabolite biosynthesis; terpenoid biosynthesis.</text>
</comment>
<comment type="subcellular location">
    <subcellularLocation>
        <location evidence="4">Cytoplasm</location>
    </subcellularLocation>
</comment>
<comment type="domain">
    <text evidence="1">The Asp-Asp-Xaa-Xaa-Asp/Glu (DDXXD/E) motif is important for the catalytic activity, presumably through binding to Mg(2+).</text>
</comment>
<comment type="similarity">
    <text evidence="4">Belongs to the terpene synthase family. Tpsa subfamily.</text>
</comment>
<reference key="1">
    <citation type="journal article" date="2012" name="Biochem. J.">
        <title>Identification and characterization of a kunzeaol synthase from Thapsia garganica: implications for the biosynthesis of the pharmaceutical thapsigargin.</title>
        <authorList>
            <person name="Pickel B."/>
            <person name="Drew D.P."/>
            <person name="Manczak T."/>
            <person name="Weitzel C."/>
            <person name="Simonsen H.T."/>
            <person name="Ro D.-K."/>
        </authorList>
    </citation>
    <scope>NUCLEOTIDE SEQUENCE [MRNA]</scope>
    <scope>FUNCTION</scope>
    <scope>CATALYTIC ACTIVITY</scope>
    <source>
        <tissue>Root</tissue>
    </source>
</reference>
<dbReference type="EC" id="4.2.3.13"/>
<dbReference type="EMBL" id="JQ290344">
    <property type="protein sequence ID" value="AFV09098.1"/>
    <property type="molecule type" value="mRNA"/>
</dbReference>
<dbReference type="SMR" id="K4L9M2"/>
<dbReference type="UniPathway" id="UPA00213"/>
<dbReference type="GO" id="GO:0005737">
    <property type="term" value="C:cytoplasm"/>
    <property type="evidence" value="ECO:0007669"/>
    <property type="project" value="UniProtKB-SubCell"/>
</dbReference>
<dbReference type="GO" id="GO:0047461">
    <property type="term" value="F:(+)-delta-cadinene synthase activity"/>
    <property type="evidence" value="ECO:0007669"/>
    <property type="project" value="UniProtKB-EC"/>
</dbReference>
<dbReference type="GO" id="GO:0000287">
    <property type="term" value="F:magnesium ion binding"/>
    <property type="evidence" value="ECO:0007669"/>
    <property type="project" value="InterPro"/>
</dbReference>
<dbReference type="GO" id="GO:0016102">
    <property type="term" value="P:diterpenoid biosynthetic process"/>
    <property type="evidence" value="ECO:0007669"/>
    <property type="project" value="InterPro"/>
</dbReference>
<dbReference type="CDD" id="cd00684">
    <property type="entry name" value="Terpene_cyclase_plant_C1"/>
    <property type="match status" value="1"/>
</dbReference>
<dbReference type="FunFam" id="1.10.600.10:FF:000007">
    <property type="entry name" value="Isoprene synthase, chloroplastic"/>
    <property type="match status" value="1"/>
</dbReference>
<dbReference type="FunFam" id="1.50.10.130:FF:000001">
    <property type="entry name" value="Isoprene synthase, chloroplastic"/>
    <property type="match status" value="1"/>
</dbReference>
<dbReference type="Gene3D" id="1.10.600.10">
    <property type="entry name" value="Farnesyl Diphosphate Synthase"/>
    <property type="match status" value="1"/>
</dbReference>
<dbReference type="Gene3D" id="1.50.10.130">
    <property type="entry name" value="Terpene synthase, N-terminal domain"/>
    <property type="match status" value="1"/>
</dbReference>
<dbReference type="InterPro" id="IPR008949">
    <property type="entry name" value="Isoprenoid_synthase_dom_sf"/>
</dbReference>
<dbReference type="InterPro" id="IPR034741">
    <property type="entry name" value="Terpene_cyclase-like_1_C"/>
</dbReference>
<dbReference type="InterPro" id="IPR044814">
    <property type="entry name" value="Terpene_cyclase_plant_C1"/>
</dbReference>
<dbReference type="InterPro" id="IPR001906">
    <property type="entry name" value="Terpene_synth_N"/>
</dbReference>
<dbReference type="InterPro" id="IPR036965">
    <property type="entry name" value="Terpene_synth_N_sf"/>
</dbReference>
<dbReference type="InterPro" id="IPR050148">
    <property type="entry name" value="Terpene_synthase-like"/>
</dbReference>
<dbReference type="InterPro" id="IPR005630">
    <property type="entry name" value="Terpene_synthase_metal-bd"/>
</dbReference>
<dbReference type="InterPro" id="IPR008930">
    <property type="entry name" value="Terpenoid_cyclase/PrenylTrfase"/>
</dbReference>
<dbReference type="PANTHER" id="PTHR31225:SF221">
    <property type="entry name" value="(-)-GERMACRENE D SYNTHASE"/>
    <property type="match status" value="1"/>
</dbReference>
<dbReference type="PANTHER" id="PTHR31225">
    <property type="entry name" value="OS04G0344100 PROTEIN-RELATED"/>
    <property type="match status" value="1"/>
</dbReference>
<dbReference type="Pfam" id="PF01397">
    <property type="entry name" value="Terpene_synth"/>
    <property type="match status" value="1"/>
</dbReference>
<dbReference type="Pfam" id="PF03936">
    <property type="entry name" value="Terpene_synth_C"/>
    <property type="match status" value="1"/>
</dbReference>
<dbReference type="SFLD" id="SFLDS00005">
    <property type="entry name" value="Isoprenoid_Synthase_Type_I"/>
    <property type="match status" value="1"/>
</dbReference>
<dbReference type="SFLD" id="SFLDG01019">
    <property type="entry name" value="Terpene_Cyclase_Like_1_C_Termi"/>
    <property type="match status" value="1"/>
</dbReference>
<dbReference type="SUPFAM" id="SSF48239">
    <property type="entry name" value="Terpenoid cyclases/Protein prenyltransferases"/>
    <property type="match status" value="1"/>
</dbReference>
<dbReference type="SUPFAM" id="SSF48576">
    <property type="entry name" value="Terpenoid synthases"/>
    <property type="match status" value="1"/>
</dbReference>